<name>TRM82_YEAST</name>
<keyword id="KW-0002">3D-structure</keyword>
<keyword id="KW-0539">Nucleus</keyword>
<keyword id="KW-0597">Phosphoprotein</keyword>
<keyword id="KW-1185">Reference proteome</keyword>
<keyword id="KW-0677">Repeat</keyword>
<keyword id="KW-0819">tRNA processing</keyword>
<keyword id="KW-0853">WD repeat</keyword>
<reference key="1">
    <citation type="journal article" date="1997" name="Nature">
        <title>The nucleotide sequence of Saccharomyces cerevisiae chromosome IV.</title>
        <authorList>
            <person name="Jacq C."/>
            <person name="Alt-Moerbe J."/>
            <person name="Andre B."/>
            <person name="Arnold W."/>
            <person name="Bahr A."/>
            <person name="Ballesta J.P.G."/>
            <person name="Bargues M."/>
            <person name="Baron L."/>
            <person name="Becker A."/>
            <person name="Biteau N."/>
            <person name="Bloecker H."/>
            <person name="Blugeon C."/>
            <person name="Boskovic J."/>
            <person name="Brandt P."/>
            <person name="Brueckner M."/>
            <person name="Buitrago M.J."/>
            <person name="Coster F."/>
            <person name="Delaveau T."/>
            <person name="del Rey F."/>
            <person name="Dujon B."/>
            <person name="Eide L.G."/>
            <person name="Garcia-Cantalejo J.M."/>
            <person name="Goffeau A."/>
            <person name="Gomez-Peris A."/>
            <person name="Granotier C."/>
            <person name="Hanemann V."/>
            <person name="Hankeln T."/>
            <person name="Hoheisel J.D."/>
            <person name="Jaeger W."/>
            <person name="Jimenez A."/>
            <person name="Jonniaux J.-L."/>
            <person name="Kraemer C."/>
            <person name="Kuester H."/>
            <person name="Laamanen P."/>
            <person name="Legros Y."/>
            <person name="Louis E.J."/>
            <person name="Moeller-Rieker S."/>
            <person name="Monnet A."/>
            <person name="Moro M."/>
            <person name="Mueller-Auer S."/>
            <person name="Nussbaumer B."/>
            <person name="Paricio N."/>
            <person name="Paulin L."/>
            <person name="Perea J."/>
            <person name="Perez-Alonso M."/>
            <person name="Perez-Ortin J.E."/>
            <person name="Pohl T.M."/>
            <person name="Prydz H."/>
            <person name="Purnelle B."/>
            <person name="Rasmussen S.W."/>
            <person name="Remacha M.A."/>
            <person name="Revuelta J.L."/>
            <person name="Rieger M."/>
            <person name="Salom D."/>
            <person name="Saluz H.P."/>
            <person name="Saiz J.E."/>
            <person name="Saren A.-M."/>
            <person name="Schaefer M."/>
            <person name="Scharfe M."/>
            <person name="Schmidt E.R."/>
            <person name="Schneider C."/>
            <person name="Scholler P."/>
            <person name="Schwarz S."/>
            <person name="Soler-Mira A."/>
            <person name="Urrestarazu L.A."/>
            <person name="Verhasselt P."/>
            <person name="Vissers S."/>
            <person name="Voet M."/>
            <person name="Volckaert G."/>
            <person name="Wagner G."/>
            <person name="Wambutt R."/>
            <person name="Wedler E."/>
            <person name="Wedler H."/>
            <person name="Woelfl S."/>
            <person name="Harris D.E."/>
            <person name="Bowman S."/>
            <person name="Brown D."/>
            <person name="Churcher C.M."/>
            <person name="Connor R."/>
            <person name="Dedman K."/>
            <person name="Gentles S."/>
            <person name="Hamlin N."/>
            <person name="Hunt S."/>
            <person name="Jones L."/>
            <person name="McDonald S."/>
            <person name="Murphy L.D."/>
            <person name="Niblett D."/>
            <person name="Odell C."/>
            <person name="Oliver K."/>
            <person name="Rajandream M.A."/>
            <person name="Richards C."/>
            <person name="Shore L."/>
            <person name="Walsh S.V."/>
            <person name="Barrell B.G."/>
            <person name="Dietrich F.S."/>
            <person name="Mulligan J.T."/>
            <person name="Allen E."/>
            <person name="Araujo R."/>
            <person name="Aviles E."/>
            <person name="Berno A."/>
            <person name="Carpenter J."/>
            <person name="Chen E."/>
            <person name="Cherry J.M."/>
            <person name="Chung E."/>
            <person name="Duncan M."/>
            <person name="Hunicke-Smith S."/>
            <person name="Hyman R.W."/>
            <person name="Komp C."/>
            <person name="Lashkari D."/>
            <person name="Lew H."/>
            <person name="Lin D."/>
            <person name="Mosedale D."/>
            <person name="Nakahara K."/>
            <person name="Namath A."/>
            <person name="Oefner P."/>
            <person name="Oh C."/>
            <person name="Petel F.X."/>
            <person name="Roberts D."/>
            <person name="Schramm S."/>
            <person name="Schroeder M."/>
            <person name="Shogren T."/>
            <person name="Shroff N."/>
            <person name="Winant A."/>
            <person name="Yelton M.A."/>
            <person name="Botstein D."/>
            <person name="Davis R.W."/>
            <person name="Johnston M."/>
            <person name="Andrews S."/>
            <person name="Brinkman R."/>
            <person name="Cooper J."/>
            <person name="Ding H."/>
            <person name="Du Z."/>
            <person name="Favello A."/>
            <person name="Fulton L."/>
            <person name="Gattung S."/>
            <person name="Greco T."/>
            <person name="Hallsworth K."/>
            <person name="Hawkins J."/>
            <person name="Hillier L.W."/>
            <person name="Jier M."/>
            <person name="Johnson D."/>
            <person name="Johnston L."/>
            <person name="Kirsten J."/>
            <person name="Kucaba T."/>
            <person name="Langston Y."/>
            <person name="Latreille P."/>
            <person name="Le T."/>
            <person name="Mardis E."/>
            <person name="Menezes S."/>
            <person name="Miller N."/>
            <person name="Nhan M."/>
            <person name="Pauley A."/>
            <person name="Peluso D."/>
            <person name="Rifkin L."/>
            <person name="Riles L."/>
            <person name="Taich A."/>
            <person name="Trevaskis E."/>
            <person name="Vignati D."/>
            <person name="Wilcox L."/>
            <person name="Wohldman P."/>
            <person name="Vaudin M."/>
            <person name="Wilson R."/>
            <person name="Waterston R."/>
            <person name="Albermann K."/>
            <person name="Hani J."/>
            <person name="Heumann K."/>
            <person name="Kleine K."/>
            <person name="Mewes H.-W."/>
            <person name="Zollner A."/>
            <person name="Zaccaria P."/>
        </authorList>
    </citation>
    <scope>NUCLEOTIDE SEQUENCE [LARGE SCALE GENOMIC DNA]</scope>
    <source>
        <strain>ATCC 204508 / S288c</strain>
    </source>
</reference>
<reference key="2">
    <citation type="journal article" date="2014" name="G3 (Bethesda)">
        <title>The reference genome sequence of Saccharomyces cerevisiae: Then and now.</title>
        <authorList>
            <person name="Engel S.R."/>
            <person name="Dietrich F.S."/>
            <person name="Fisk D.G."/>
            <person name="Binkley G."/>
            <person name="Balakrishnan R."/>
            <person name="Costanzo M.C."/>
            <person name="Dwight S.S."/>
            <person name="Hitz B.C."/>
            <person name="Karra K."/>
            <person name="Nash R.S."/>
            <person name="Weng S."/>
            <person name="Wong E.D."/>
            <person name="Lloyd P."/>
            <person name="Skrzypek M.S."/>
            <person name="Miyasato S.R."/>
            <person name="Simison M."/>
            <person name="Cherry J.M."/>
        </authorList>
    </citation>
    <scope>GENOME REANNOTATION</scope>
    <source>
        <strain>ATCC 204508 / S288c</strain>
    </source>
</reference>
<reference key="3">
    <citation type="journal article" date="2002" name="RNA">
        <title>Two proteins that form a complex are required for 7-methylguanosine modification of yeast tRNA.</title>
        <authorList>
            <person name="Alexandrov A."/>
            <person name="Martzen M.R."/>
            <person name="Phizicky E.M."/>
        </authorList>
    </citation>
    <scope>CHARACTERIZATION</scope>
</reference>
<reference key="4">
    <citation type="journal article" date="2003" name="Nature">
        <title>Global analysis of protein localization in budding yeast.</title>
        <authorList>
            <person name="Huh W.-K."/>
            <person name="Falvo J.V."/>
            <person name="Gerke L.C."/>
            <person name="Carroll A.S."/>
            <person name="Howson R.W."/>
            <person name="Weissman J.S."/>
            <person name="O'Shea E.K."/>
        </authorList>
    </citation>
    <scope>SUBCELLULAR LOCATION [LARGE SCALE ANALYSIS]</scope>
</reference>
<reference key="5">
    <citation type="journal article" date="2003" name="Nature">
        <title>Global analysis of protein expression in yeast.</title>
        <authorList>
            <person name="Ghaemmaghami S."/>
            <person name="Huh W.-K."/>
            <person name="Bower K."/>
            <person name="Howson R.W."/>
            <person name="Belle A."/>
            <person name="Dephoure N."/>
            <person name="O'Shea E.K."/>
            <person name="Weissman J.S."/>
        </authorList>
    </citation>
    <scope>LEVEL OF PROTEIN EXPRESSION [LARGE SCALE ANALYSIS]</scope>
</reference>
<reference key="6">
    <citation type="journal article" date="2005" name="RNA">
        <title>tRNA m7G methyltransferase Trm8p/Trm82p: evidence linking activity to a growth phenotype and implicating Trm82p in maintaining levels of active Trm8p.</title>
        <authorList>
            <person name="Alexandrov A."/>
            <person name="Grayhack E.J."/>
            <person name="Phizicky E.M."/>
        </authorList>
    </citation>
    <scope>FUNCTION</scope>
    <scope>INTERACTION WITH TRM8</scope>
</reference>
<reference key="7">
    <citation type="journal article" date="2006" name="Mol. Cell">
        <title>Rapid tRNA decay can result from lack of nonessential modifications.</title>
        <authorList>
            <person name="Alexandrov A."/>
            <person name="Chernyakov I."/>
            <person name="Gu W."/>
            <person name="Hiley S.L."/>
            <person name="Hughes T.R."/>
            <person name="Grayhack E.J."/>
            <person name="Phizicky E.M."/>
        </authorList>
    </citation>
    <scope>FUNCTION</scope>
</reference>
<reference key="8">
    <citation type="journal article" date="2007" name="FEBS Lett.">
        <title>RNA recognition mechanism of eukaryote tRNA (m7G46) methyltransferase (Trm8-Trm82 complex).</title>
        <authorList>
            <person name="Matsumoto K."/>
            <person name="Toyooka T."/>
            <person name="Tomikawa C."/>
            <person name="Ochi A."/>
            <person name="Takano Y."/>
            <person name="Takayanagi N."/>
            <person name="Endo Y."/>
            <person name="Hori H."/>
        </authorList>
    </citation>
    <scope>FUNCTION</scope>
</reference>
<reference key="9">
    <citation type="journal article" date="2008" name="Mol. Cell. Proteomics">
        <title>A multidimensional chromatography technology for in-depth phosphoproteome analysis.</title>
        <authorList>
            <person name="Albuquerque C.P."/>
            <person name="Smolka M.B."/>
            <person name="Payne S.H."/>
            <person name="Bafna V."/>
            <person name="Eng J."/>
            <person name="Zhou H."/>
        </authorList>
    </citation>
    <scope>PHOSPHORYLATION [LARGE SCALE ANALYSIS] AT SER-93</scope>
    <scope>IDENTIFICATION BY MASS SPECTROMETRY [LARGE SCALE ANALYSIS]</scope>
</reference>
<reference key="10">
    <citation type="journal article" date="2012" name="Proc. Natl. Acad. Sci. U.S.A.">
        <title>N-terminal acetylome analyses and functional insights of the N-terminal acetyltransferase NatB.</title>
        <authorList>
            <person name="Van Damme P."/>
            <person name="Lasa M."/>
            <person name="Polevoda B."/>
            <person name="Gazquez C."/>
            <person name="Elosegui-Artola A."/>
            <person name="Kim D.S."/>
            <person name="De Juan-Pardo E."/>
            <person name="Demeyer K."/>
            <person name="Hole K."/>
            <person name="Larrea E."/>
            <person name="Timmerman E."/>
            <person name="Prieto J."/>
            <person name="Arnesen T."/>
            <person name="Sherman F."/>
            <person name="Gevaert K."/>
            <person name="Aldabe R."/>
        </authorList>
    </citation>
    <scope>IDENTIFICATION BY MASS SPECTROMETRY [LARGE SCALE ANALYSIS]</scope>
</reference>
<reference key="11">
    <citation type="journal article" date="2015" name="Genome Biol.">
        <title>Mutation in WDR4 impairs tRNA m(7)G46 methylation and causes a distinct form of microcephalic primordial dwarfism.</title>
        <authorList>
            <person name="Shaheen R."/>
            <person name="Abdel-Salam G.M."/>
            <person name="Guy M.P."/>
            <person name="Alomar R."/>
            <person name="Abdel-Hamid M.S."/>
            <person name="Afifi H.H."/>
            <person name="Ismail S.I."/>
            <person name="Emam B.A."/>
            <person name="Phizicky E.M."/>
            <person name="Alkuraya F.S."/>
        </authorList>
    </citation>
    <scope>FUNCTION</scope>
    <scope>PATHWAY</scope>
    <scope>MUTAGENESIS OF LYS-223</scope>
</reference>
<reference key="12">
    <citation type="journal article" date="2008" name="Structure">
        <title>Structure of the yeast tRNA m7G methylation complex.</title>
        <authorList>
            <person name="Leulliot N."/>
            <person name="Chaillet M."/>
            <person name="Durand D."/>
            <person name="Ulryck N."/>
            <person name="Blondeau K."/>
            <person name="van Tilbeurgh H."/>
        </authorList>
    </citation>
    <scope>X-RAY CRYSTALLOGRAPHY (2.4 ANGSTROMS) IN COMPLEX WITH TRM8</scope>
    <scope>FUNCTION</scope>
    <scope>SUBUNIT</scope>
    <scope>DOMAINS WD REPEATS</scope>
</reference>
<accession>Q03774</accession>
<accession>D6VSE5</accession>
<gene>
    <name evidence="1" type="primary">TRM82</name>
    <name type="ordered locus">YDR165W</name>
    <name type="ORF">YD8358.19</name>
</gene>
<evidence type="ECO:0000255" key="1">
    <source>
        <dbReference type="HAMAP-Rule" id="MF_03056"/>
    </source>
</evidence>
<evidence type="ECO:0000256" key="2">
    <source>
        <dbReference type="SAM" id="MobiDB-lite"/>
    </source>
</evidence>
<evidence type="ECO:0000269" key="3">
    <source>
    </source>
</evidence>
<evidence type="ECO:0000269" key="4">
    <source>
    </source>
</evidence>
<evidence type="ECO:0000269" key="5">
    <source>
    </source>
</evidence>
<evidence type="ECO:0000269" key="6">
    <source>
    </source>
</evidence>
<evidence type="ECO:0000269" key="7">
    <source>
    </source>
</evidence>
<evidence type="ECO:0000269" key="8">
    <source>
    </source>
</evidence>
<evidence type="ECO:0000269" key="9">
    <source>
    </source>
</evidence>
<evidence type="ECO:0007744" key="10">
    <source>
    </source>
</evidence>
<evidence type="ECO:0007829" key="11">
    <source>
        <dbReference type="PDB" id="2VDU"/>
    </source>
</evidence>
<sequence>MSVIHPLQNLLTSRDGSLVFAIIKNCILSFKYQSPNHWEFAGKWSDDFDKIQESRNTTAKEQQGQSSENENENKKLKSNKGDSIKRTAAKVPSPGLGAPPIYSYIRNLRLTSDESRLIACADSDKSLLVFDVDKTSKNVLKLRKRFCFSKRPNAISIAEDDTTVIIADKFGDVYSIDINSIPEEKFTQEPILGHVSMLTDVHLIKDSDGHQFIITSDRDEHIKISHYPQCFIVDKWLFGHKHFVSSICCGKDYLLLSAGGDDKIFAWDWKTGKNLSTFDYNSLIKPYLNDQHLAPPRFQNENNDIIEFAVSKIIKSKNLPFVAFFVEATKCIIILEMSEKQKGDLALKQIITFPYNVISLSAHNDEFQVTLDNKESSGVQKNFAKFIEYNLNENSFVVNNEKSNEFDSAIIQSVQGDSNLVTKKEEIYPLYNVSSLRKHGEHYS</sequence>
<organism>
    <name type="scientific">Saccharomyces cerevisiae (strain ATCC 204508 / S288c)</name>
    <name type="common">Baker's yeast</name>
    <dbReference type="NCBI Taxonomy" id="559292"/>
    <lineage>
        <taxon>Eukaryota</taxon>
        <taxon>Fungi</taxon>
        <taxon>Dikarya</taxon>
        <taxon>Ascomycota</taxon>
        <taxon>Saccharomycotina</taxon>
        <taxon>Saccharomycetes</taxon>
        <taxon>Saccharomycetales</taxon>
        <taxon>Saccharomycetaceae</taxon>
        <taxon>Saccharomyces</taxon>
    </lineage>
</organism>
<dbReference type="EMBL" id="Z50046">
    <property type="protein sequence ID" value="CAA90385.1"/>
    <property type="molecule type" value="Genomic_DNA"/>
</dbReference>
<dbReference type="EMBL" id="BK006938">
    <property type="protein sequence ID" value="DAA12005.1"/>
    <property type="molecule type" value="Genomic_DNA"/>
</dbReference>
<dbReference type="PIR" id="S57989">
    <property type="entry name" value="S57989"/>
</dbReference>
<dbReference type="RefSeq" id="NP_010449.1">
    <property type="nucleotide sequence ID" value="NM_001180472.1"/>
</dbReference>
<dbReference type="PDB" id="2VDU">
    <property type="method" value="X-ray"/>
    <property type="resolution" value="2.40 A"/>
    <property type="chains" value="B/D=1-444"/>
</dbReference>
<dbReference type="PDBsum" id="2VDU"/>
<dbReference type="SMR" id="Q03774"/>
<dbReference type="BioGRID" id="32216">
    <property type="interactions" value="71"/>
</dbReference>
<dbReference type="ComplexPortal" id="CPX-1632">
    <property type="entry name" value="tRNA (guanine-N(7)-)-methyltransferase"/>
</dbReference>
<dbReference type="DIP" id="DIP-8795N"/>
<dbReference type="FunCoup" id="Q03774">
    <property type="interactions" value="335"/>
</dbReference>
<dbReference type="IntAct" id="Q03774">
    <property type="interactions" value="8"/>
</dbReference>
<dbReference type="MINT" id="Q03774"/>
<dbReference type="STRING" id="4932.YDR165W"/>
<dbReference type="iPTMnet" id="Q03774"/>
<dbReference type="PaxDb" id="4932-YDR165W"/>
<dbReference type="PeptideAtlas" id="Q03774"/>
<dbReference type="EnsemblFungi" id="YDR165W_mRNA">
    <property type="protein sequence ID" value="YDR165W"/>
    <property type="gene ID" value="YDR165W"/>
</dbReference>
<dbReference type="GeneID" id="851743"/>
<dbReference type="KEGG" id="sce:YDR165W"/>
<dbReference type="AGR" id="SGD:S000002572"/>
<dbReference type="SGD" id="S000002572">
    <property type="gene designation" value="TRM82"/>
</dbReference>
<dbReference type="VEuPathDB" id="FungiDB:YDR165W"/>
<dbReference type="eggNOG" id="KOG3914">
    <property type="taxonomic scope" value="Eukaryota"/>
</dbReference>
<dbReference type="GeneTree" id="ENSGT00390000012174"/>
<dbReference type="HOGENOM" id="CLU_022082_0_0_1"/>
<dbReference type="InParanoid" id="Q03774"/>
<dbReference type="OMA" id="VKHWLFG"/>
<dbReference type="OrthoDB" id="339900at2759"/>
<dbReference type="BioCyc" id="YEAST:YDR165W-MONOMER"/>
<dbReference type="BRENDA" id="2.1.1.33">
    <property type="organism ID" value="984"/>
</dbReference>
<dbReference type="UniPathway" id="UPA00989"/>
<dbReference type="BioGRID-ORCS" id="851743">
    <property type="hits" value="0 hits in 10 CRISPR screens"/>
</dbReference>
<dbReference type="EvolutionaryTrace" id="Q03774"/>
<dbReference type="PRO" id="PR:Q03774"/>
<dbReference type="Proteomes" id="UP000002311">
    <property type="component" value="Chromosome IV"/>
</dbReference>
<dbReference type="RNAct" id="Q03774">
    <property type="molecule type" value="protein"/>
</dbReference>
<dbReference type="GO" id="GO:0005829">
    <property type="term" value="C:cytosol"/>
    <property type="evidence" value="ECO:0000314"/>
    <property type="project" value="SGD"/>
</dbReference>
<dbReference type="GO" id="GO:0005654">
    <property type="term" value="C:nucleoplasm"/>
    <property type="evidence" value="ECO:0000304"/>
    <property type="project" value="Reactome"/>
</dbReference>
<dbReference type="GO" id="GO:0005634">
    <property type="term" value="C:nucleus"/>
    <property type="evidence" value="ECO:0000314"/>
    <property type="project" value="SGD"/>
</dbReference>
<dbReference type="GO" id="GO:0106143">
    <property type="term" value="C:tRNA (m7G46) methyltransferase complex"/>
    <property type="evidence" value="ECO:0000314"/>
    <property type="project" value="SGD"/>
</dbReference>
<dbReference type="GO" id="GO:0043527">
    <property type="term" value="C:tRNA methyltransferase complex"/>
    <property type="evidence" value="ECO:0000353"/>
    <property type="project" value="ComplexPortal"/>
</dbReference>
<dbReference type="GO" id="GO:0008047">
    <property type="term" value="F:enzyme activator activity"/>
    <property type="evidence" value="ECO:0000314"/>
    <property type="project" value="SGD"/>
</dbReference>
<dbReference type="GO" id="GO:0106004">
    <property type="term" value="P:tRNA (guanine-N7)-methylation"/>
    <property type="evidence" value="ECO:0000314"/>
    <property type="project" value="SGD"/>
</dbReference>
<dbReference type="GO" id="GO:0030488">
    <property type="term" value="P:tRNA methylation"/>
    <property type="evidence" value="ECO:0000314"/>
    <property type="project" value="ComplexPortal"/>
</dbReference>
<dbReference type="GO" id="GO:0006400">
    <property type="term" value="P:tRNA modification"/>
    <property type="evidence" value="ECO:0000318"/>
    <property type="project" value="GO_Central"/>
</dbReference>
<dbReference type="FunFam" id="2.130.10.10:FF:001177">
    <property type="entry name" value="tRNA (guanine-N(7)-)-methyltransferase non-catalytic subunit TRM82"/>
    <property type="match status" value="1"/>
</dbReference>
<dbReference type="Gene3D" id="2.130.10.10">
    <property type="entry name" value="YVTN repeat-like/Quinoprotein amine dehydrogenase"/>
    <property type="match status" value="1"/>
</dbReference>
<dbReference type="HAMAP" id="MF_03056">
    <property type="entry name" value="TRM82"/>
    <property type="match status" value="1"/>
</dbReference>
<dbReference type="InterPro" id="IPR028884">
    <property type="entry name" value="Trm82"/>
</dbReference>
<dbReference type="InterPro" id="IPR015943">
    <property type="entry name" value="WD40/YVTN_repeat-like_dom_sf"/>
</dbReference>
<dbReference type="InterPro" id="IPR036322">
    <property type="entry name" value="WD40_repeat_dom_sf"/>
</dbReference>
<dbReference type="InterPro" id="IPR001680">
    <property type="entry name" value="WD40_rpt"/>
</dbReference>
<dbReference type="PANTHER" id="PTHR16288:SF0">
    <property type="entry name" value="TRNA (GUANINE-N(7)-)-METHYLTRANSFERASE NON-CATALYTIC SUBUNIT WDR4"/>
    <property type="match status" value="1"/>
</dbReference>
<dbReference type="PANTHER" id="PTHR16288">
    <property type="entry name" value="WD40 REPEAT PROTEIN 4"/>
    <property type="match status" value="1"/>
</dbReference>
<dbReference type="SMART" id="SM00320">
    <property type="entry name" value="WD40"/>
    <property type="match status" value="3"/>
</dbReference>
<dbReference type="SUPFAM" id="SSF50978">
    <property type="entry name" value="WD40 repeat-like"/>
    <property type="match status" value="1"/>
</dbReference>
<dbReference type="PROSITE" id="PS50082">
    <property type="entry name" value="WD_REPEATS_2"/>
    <property type="match status" value="1"/>
</dbReference>
<dbReference type="PROSITE" id="PS50294">
    <property type="entry name" value="WD_REPEATS_REGION"/>
    <property type="match status" value="1"/>
</dbReference>
<proteinExistence type="evidence at protein level"/>
<protein>
    <recommendedName>
        <fullName evidence="1">tRNA (guanine-N(7)-)-methyltransferase non-catalytic subunit TRM82</fullName>
    </recommendedName>
    <alternativeName>
        <fullName evidence="1">Transfer RNA methyltransferase 82</fullName>
    </alternativeName>
</protein>
<comment type="function">
    <text evidence="1 5 6 7 8 9">Required for the formation of N(7)-methylguanine at position 46 (m7G46) in tRNA, a modification required to maintain stability of tRNAs; its absence resulting in tRNA decay. In the complex, it is required to stabilize and induce conformational changes of the catalytic subunit.</text>
</comment>
<comment type="pathway">
    <text evidence="9">tRNA modification; N(7)-methylguanine-tRNA biosynthesis.</text>
</comment>
<comment type="subunit">
    <text evidence="1 8">Forms a heterodimer with the catalytic subunit TRM8.</text>
</comment>
<comment type="interaction">
    <interactant intactId="EBI-19486">
        <id>Q03774</id>
    </interactant>
    <interactant intactId="EBI-19552">
        <id>Q12009</id>
        <label>TRM8</label>
    </interactant>
    <organismsDiffer>false</organismsDiffer>
    <experiments>9</experiments>
</comment>
<comment type="subcellular location">
    <subcellularLocation>
        <location evidence="1 3">Nucleus</location>
    </subcellularLocation>
</comment>
<comment type="miscellaneous">
    <text evidence="4">Present with 5910 molecules/cell in log phase SD medium.</text>
</comment>
<comment type="similarity">
    <text evidence="1">Belongs to the WD repeat TRM82 family.</text>
</comment>
<feature type="chain" id="PRO_0000051295" description="tRNA (guanine-N(7)-)-methyltransferase non-catalytic subunit TRM82">
    <location>
        <begin position="1"/>
        <end position="444"/>
    </location>
</feature>
<feature type="repeat" description="WD 1">
    <location>
        <begin position="1"/>
        <end position="47"/>
    </location>
</feature>
<feature type="repeat" description="WD 2">
    <location>
        <begin position="48"/>
        <end position="99"/>
    </location>
</feature>
<feature type="repeat" description="WD 3">
    <location>
        <begin position="100"/>
        <end position="147"/>
    </location>
</feature>
<feature type="repeat" description="WD 4">
    <location>
        <begin position="148"/>
        <end position="192"/>
    </location>
</feature>
<feature type="repeat" description="WD 5">
    <location>
        <begin position="193"/>
        <end position="237"/>
    </location>
</feature>
<feature type="repeat" description="WD 6">
    <location>
        <begin position="238"/>
        <end position="279"/>
    </location>
</feature>
<feature type="repeat" description="WD 7">
    <location>
        <begin position="308"/>
        <end position="354"/>
    </location>
</feature>
<feature type="region of interest" description="Disordered" evidence="2">
    <location>
        <begin position="55"/>
        <end position="92"/>
    </location>
</feature>
<feature type="compositionally biased region" description="Basic and acidic residues" evidence="2">
    <location>
        <begin position="71"/>
        <end position="85"/>
    </location>
</feature>
<feature type="modified residue" description="Phosphoserine" evidence="10">
    <location>
        <position position="93"/>
    </location>
</feature>
<feature type="mutagenesis site" description="Decreased tRNA methylation." evidence="9">
    <original>K</original>
    <variation>L</variation>
    <location>
        <position position="223"/>
    </location>
</feature>
<feature type="strand" evidence="11">
    <location>
        <begin position="9"/>
        <end position="12"/>
    </location>
</feature>
<feature type="strand" evidence="11">
    <location>
        <begin position="14"/>
        <end position="23"/>
    </location>
</feature>
<feature type="strand" evidence="11">
    <location>
        <begin position="26"/>
        <end position="33"/>
    </location>
</feature>
<feature type="turn" evidence="11">
    <location>
        <begin position="34"/>
        <end position="36"/>
    </location>
</feature>
<feature type="strand" evidence="11">
    <location>
        <begin position="37"/>
        <end position="45"/>
    </location>
</feature>
<feature type="strand" evidence="11">
    <location>
        <begin position="105"/>
        <end position="110"/>
    </location>
</feature>
<feature type="strand" evidence="11">
    <location>
        <begin position="114"/>
        <end position="121"/>
    </location>
</feature>
<feature type="helix" evidence="11">
    <location>
        <begin position="122"/>
        <end position="124"/>
    </location>
</feature>
<feature type="strand" evidence="11">
    <location>
        <begin position="126"/>
        <end position="132"/>
    </location>
</feature>
<feature type="strand" evidence="11">
    <location>
        <begin position="134"/>
        <end position="138"/>
    </location>
</feature>
<feature type="strand" evidence="11">
    <location>
        <begin position="140"/>
        <end position="147"/>
    </location>
</feature>
<feature type="strand" evidence="11">
    <location>
        <begin position="152"/>
        <end position="157"/>
    </location>
</feature>
<feature type="strand" evidence="11">
    <location>
        <begin position="161"/>
        <end position="168"/>
    </location>
</feature>
<feature type="strand" evidence="11">
    <location>
        <begin position="171"/>
        <end position="177"/>
    </location>
</feature>
<feature type="strand" evidence="11">
    <location>
        <begin position="191"/>
        <end position="193"/>
    </location>
</feature>
<feature type="strand" evidence="11">
    <location>
        <begin position="198"/>
        <end position="205"/>
    </location>
</feature>
<feature type="strand" evidence="11">
    <location>
        <begin position="211"/>
        <end position="217"/>
    </location>
</feature>
<feature type="strand" evidence="11">
    <location>
        <begin position="222"/>
        <end position="228"/>
    </location>
</feature>
<feature type="strand" evidence="11">
    <location>
        <begin position="233"/>
        <end position="236"/>
    </location>
</feature>
<feature type="strand" evidence="11">
    <location>
        <begin position="244"/>
        <end position="249"/>
    </location>
</feature>
<feature type="strand" evidence="11">
    <location>
        <begin position="254"/>
        <end position="268"/>
    </location>
</feature>
<feature type="turn" evidence="11">
    <location>
        <begin position="269"/>
        <end position="271"/>
    </location>
</feature>
<feature type="strand" evidence="11">
    <location>
        <begin position="274"/>
        <end position="279"/>
    </location>
</feature>
<feature type="helix" evidence="11">
    <location>
        <begin position="281"/>
        <end position="284"/>
    </location>
</feature>
<feature type="helix" evidence="11">
    <location>
        <begin position="285"/>
        <end position="287"/>
    </location>
</feature>
<feature type="strand" evidence="11">
    <location>
        <begin position="310"/>
        <end position="315"/>
    </location>
</feature>
<feature type="strand" evidence="11">
    <location>
        <begin position="317"/>
        <end position="326"/>
    </location>
</feature>
<feature type="strand" evidence="11">
    <location>
        <begin position="330"/>
        <end position="337"/>
    </location>
</feature>
<feature type="strand" evidence="11">
    <location>
        <begin position="339"/>
        <end position="341"/>
    </location>
</feature>
<feature type="strand" evidence="11">
    <location>
        <begin position="345"/>
        <end position="352"/>
    </location>
</feature>
<feature type="strand" evidence="11">
    <location>
        <begin position="357"/>
        <end position="363"/>
    </location>
</feature>
<feature type="strand" evidence="11">
    <location>
        <begin position="366"/>
        <end position="371"/>
    </location>
</feature>
<feature type="strand" evidence="11">
    <location>
        <begin position="383"/>
        <end position="390"/>
    </location>
</feature>
<feature type="turn" evidence="11">
    <location>
        <begin position="391"/>
        <end position="394"/>
    </location>
</feature>
<feature type="strand" evidence="11">
    <location>
        <begin position="395"/>
        <end position="398"/>
    </location>
</feature>
<feature type="helix" evidence="11">
    <location>
        <begin position="400"/>
        <end position="414"/>
    </location>
</feature>
<feature type="turn" evidence="11">
    <location>
        <begin position="418"/>
        <end position="420"/>
    </location>
</feature>
<feature type="helix" evidence="11">
    <location>
        <begin position="424"/>
        <end position="426"/>
    </location>
</feature>